<feature type="chain" id="PRO_0000310938" description="Neuraminidase">
    <location>
        <begin position="1"/>
        <end position="449"/>
    </location>
</feature>
<feature type="topological domain" description="Intravirion" evidence="1">
    <location>
        <begin position="1"/>
        <end position="6"/>
    </location>
</feature>
<feature type="transmembrane region" description="Helical" evidence="1">
    <location>
        <begin position="7"/>
        <end position="27"/>
    </location>
</feature>
<feature type="topological domain" description="Virion surface" evidence="1">
    <location>
        <begin position="28"/>
        <end position="449"/>
    </location>
</feature>
<feature type="region of interest" description="Involved in apical transport and lipid raft association" evidence="1">
    <location>
        <begin position="11"/>
        <end position="33"/>
    </location>
</feature>
<feature type="region of interest" description="Hypervariable stalk region" evidence="1">
    <location>
        <begin position="36"/>
        <end position="70"/>
    </location>
</feature>
<feature type="region of interest" description="Head of neuraminidase" evidence="1">
    <location>
        <begin position="71"/>
        <end position="449"/>
    </location>
</feature>
<feature type="active site" description="Proton donor/acceptor" evidence="1">
    <location>
        <position position="131"/>
    </location>
</feature>
<feature type="active site" description="Nucleophile" evidence="1">
    <location>
        <position position="382"/>
    </location>
</feature>
<feature type="binding site" evidence="1">
    <location>
        <position position="98"/>
    </location>
    <ligand>
        <name>substrate</name>
    </ligand>
</feature>
<feature type="binding site" evidence="1">
    <location>
        <position position="132"/>
    </location>
    <ligand>
        <name>substrate</name>
    </ligand>
</feature>
<feature type="binding site" evidence="1">
    <location>
        <begin position="257"/>
        <end position="258"/>
    </location>
    <ligand>
        <name>substrate</name>
    </ligand>
</feature>
<feature type="binding site" evidence="1">
    <location>
        <position position="273"/>
    </location>
    <ligand>
        <name>substrate</name>
    </ligand>
</feature>
<feature type="binding site" evidence="1">
    <location>
        <position position="274"/>
    </location>
    <ligand>
        <name>Ca(2+)</name>
        <dbReference type="ChEBI" id="CHEBI:29108"/>
    </ligand>
</feature>
<feature type="binding site" evidence="1">
    <location>
        <position position="278"/>
    </location>
    <ligand>
        <name>Ca(2+)</name>
        <dbReference type="ChEBI" id="CHEBI:29108"/>
    </ligand>
</feature>
<feature type="binding site" evidence="1">
    <location>
        <position position="304"/>
    </location>
    <ligand>
        <name>Ca(2+)</name>
        <dbReference type="ChEBI" id="CHEBI:29108"/>
    </ligand>
</feature>
<feature type="binding site" evidence="1">
    <location>
        <position position="348"/>
    </location>
    <ligand>
        <name>substrate</name>
    </ligand>
</feature>
<feature type="glycosylation site" description="N-linked (GlcNAc...) asparagine; by host" evidence="1">
    <location>
        <position position="68"/>
    </location>
</feature>
<feature type="glycosylation site" description="N-linked (GlcNAc...) asparagine; by host" evidence="1">
    <location>
        <position position="126"/>
    </location>
</feature>
<feature type="glycosylation site" description="N-linked (GlcNAc...) asparagine; by host" evidence="1">
    <location>
        <position position="215"/>
    </location>
</feature>
<feature type="disulfide bond" evidence="1">
    <location>
        <begin position="72"/>
        <end position="397"/>
    </location>
</feature>
<feature type="disulfide bond" evidence="1">
    <location>
        <begin position="104"/>
        <end position="109"/>
    </location>
</feature>
<feature type="disulfide bond" evidence="1">
    <location>
        <begin position="164"/>
        <end position="211"/>
    </location>
</feature>
<feature type="disulfide bond" evidence="1">
    <location>
        <begin position="213"/>
        <end position="218"/>
    </location>
</feature>
<feature type="disulfide bond" evidence="1">
    <location>
        <begin position="259"/>
        <end position="272"/>
    </location>
</feature>
<feature type="disulfide bond" evidence="1">
    <location>
        <begin position="261"/>
        <end position="270"/>
    </location>
</feature>
<feature type="disulfide bond" evidence="1">
    <location>
        <begin position="298"/>
        <end position="315"/>
    </location>
</feature>
<feature type="disulfide bond" evidence="1">
    <location>
        <begin position="401"/>
        <end position="426"/>
    </location>
</feature>
<dbReference type="EC" id="3.2.1.18" evidence="1"/>
<dbReference type="EMBL" id="AY575890">
    <property type="protein sequence ID" value="AAT39070.2"/>
    <property type="molecule type" value="Genomic_DNA"/>
</dbReference>
<dbReference type="SMR" id="Q6J8D5"/>
<dbReference type="CAZy" id="GH34">
    <property type="family name" value="Glycoside Hydrolase Family 34"/>
</dbReference>
<dbReference type="GlyCosmos" id="Q6J8D5">
    <property type="glycosylation" value="3 sites, No reported glycans"/>
</dbReference>
<dbReference type="GO" id="GO:0020002">
    <property type="term" value="C:host cell plasma membrane"/>
    <property type="evidence" value="ECO:0007669"/>
    <property type="project" value="UniProtKB-SubCell"/>
</dbReference>
<dbReference type="GO" id="GO:0016020">
    <property type="term" value="C:membrane"/>
    <property type="evidence" value="ECO:0007669"/>
    <property type="project" value="UniProtKB-UniRule"/>
</dbReference>
<dbReference type="GO" id="GO:0055036">
    <property type="term" value="C:virion membrane"/>
    <property type="evidence" value="ECO:0007669"/>
    <property type="project" value="UniProtKB-SubCell"/>
</dbReference>
<dbReference type="GO" id="GO:0004308">
    <property type="term" value="F:exo-alpha-sialidase activity"/>
    <property type="evidence" value="ECO:0007669"/>
    <property type="project" value="UniProtKB-UniRule"/>
</dbReference>
<dbReference type="GO" id="GO:0046872">
    <property type="term" value="F:metal ion binding"/>
    <property type="evidence" value="ECO:0007669"/>
    <property type="project" value="UniProtKB-UniRule"/>
</dbReference>
<dbReference type="GO" id="GO:0005975">
    <property type="term" value="P:carbohydrate metabolic process"/>
    <property type="evidence" value="ECO:0007669"/>
    <property type="project" value="InterPro"/>
</dbReference>
<dbReference type="GO" id="GO:0046761">
    <property type="term" value="P:viral budding from plasma membrane"/>
    <property type="evidence" value="ECO:0007669"/>
    <property type="project" value="UniProtKB-UniRule"/>
</dbReference>
<dbReference type="CDD" id="cd15483">
    <property type="entry name" value="Influenza_NA"/>
    <property type="match status" value="1"/>
</dbReference>
<dbReference type="FunFam" id="2.120.10.10:FF:000001">
    <property type="entry name" value="Neuraminidase"/>
    <property type="match status" value="1"/>
</dbReference>
<dbReference type="Gene3D" id="2.120.10.10">
    <property type="match status" value="1"/>
</dbReference>
<dbReference type="HAMAP" id="MF_04071">
    <property type="entry name" value="INFV_NRAM"/>
    <property type="match status" value="1"/>
</dbReference>
<dbReference type="InterPro" id="IPR001860">
    <property type="entry name" value="Glyco_hydro_34"/>
</dbReference>
<dbReference type="InterPro" id="IPR033654">
    <property type="entry name" value="Sialidase_Influenza_A/B"/>
</dbReference>
<dbReference type="InterPro" id="IPR036278">
    <property type="entry name" value="Sialidase_sf"/>
</dbReference>
<dbReference type="Pfam" id="PF00064">
    <property type="entry name" value="Neur"/>
    <property type="match status" value="1"/>
</dbReference>
<dbReference type="SUPFAM" id="SSF50939">
    <property type="entry name" value="Sialidases"/>
    <property type="match status" value="1"/>
</dbReference>
<accession>Q6J8D5</accession>
<proteinExistence type="inferred from homology"/>
<evidence type="ECO:0000255" key="1">
    <source>
        <dbReference type="HAMAP-Rule" id="MF_04071"/>
    </source>
</evidence>
<protein>
    <recommendedName>
        <fullName evidence="1">Neuraminidase</fullName>
        <ecNumber evidence="1">3.2.1.18</ecNumber>
    </recommendedName>
</protein>
<comment type="function">
    <text evidence="1">Catalyzes the removal of terminal sialic acid residues from viral and cellular glycoconjugates. Cleaves off the terminal sialic acids on the glycosylated HA during virus budding to facilitate virus release. Additionally helps virus spread through the circulation by further removing sialic acids from the cell surface. These cleavages prevent self-aggregation and ensure the efficient spread of the progeny virus from cell to cell. Otherwise, infection would be limited to one round of replication. Described as a receptor-destroying enzyme because it cleaves a terminal sialic acid from the cellular receptors. May facilitate viral invasion of the upper airways by cleaving the sialic acid moieties on the mucin of the airway epithelial cells. Likely to plays a role in the budding process through its association with lipid rafts during intracellular transport. May additionally display a raft-association independent effect on budding. Plays a role in the determination of host range restriction on replication and virulence. Sialidase activity in late endosome/lysosome traffic seems to enhance virus replication.</text>
</comment>
<comment type="catalytic activity">
    <reaction evidence="1">
        <text>Hydrolysis of alpha-(2-&gt;3)-, alpha-(2-&gt;6)-, alpha-(2-&gt;8)- glycosidic linkages of terminal sialic acid residues in oligosaccharides, glycoproteins, glycolipids, colominic acid and synthetic substrates.</text>
        <dbReference type="EC" id="3.2.1.18"/>
    </reaction>
</comment>
<comment type="cofactor">
    <cofactor evidence="1">
        <name>Ca(2+)</name>
        <dbReference type="ChEBI" id="CHEBI:29108"/>
    </cofactor>
</comment>
<comment type="activity regulation">
    <text evidence="1">Inhibited by the neuraminidase inhibitors zanamivir (Relenza) and oseltamivir (Tamiflu). These drugs interfere with the release of progeny virus from infected cells and are effective against all influenza strains. Resistance to neuraminidase inhibitors is quite rare.</text>
</comment>
<comment type="subunit">
    <text evidence="1">Homotetramer.</text>
</comment>
<comment type="subcellular location">
    <subcellularLocation>
        <location evidence="1">Virion membrane</location>
    </subcellularLocation>
    <subcellularLocation>
        <location evidence="1">Host apical cell membrane</location>
        <topology evidence="1">Single-pass type II membrane protein</topology>
    </subcellularLocation>
    <text evidence="1">Preferentially accumulates at the apical plasma membrane in infected polarized epithelial cells, which is the virus assembly site. Uses lipid rafts for cell surface transport and apical sorting. In the virion, forms a mushroom-shaped spike on the surface of the membrane.</text>
</comment>
<comment type="domain">
    <text evidence="1">Intact N-terminus is essential for virion morphogenesis. Possesses two apical sorting signals, one in the ectodomain, which is likely to be a glycan, and the other in the transmembrane domain. The transmembrane domain also plays a role in lipid raft association.</text>
</comment>
<comment type="PTM">
    <text evidence="1">N-glycosylated.</text>
</comment>
<comment type="miscellaneous">
    <text>The influenza A genome consist of 8 RNA segments. Genetic variation of hemagglutinin and/or neuraminidase genes results in the emergence of new influenza strains. The mechanism of variation can be the result of point mutations or the result of genetic reassortment between segments of two different strains.</text>
</comment>
<comment type="similarity">
    <text evidence="1">Belongs to the glycosyl hydrolase 34 family.</text>
</comment>
<organism>
    <name type="scientific">Influenza A virus (strain A/Chicken/Hong Kong/96.1/2002 H5N1 genotype Y)</name>
    <dbReference type="NCBI Taxonomy" id="279803"/>
    <lineage>
        <taxon>Viruses</taxon>
        <taxon>Riboviria</taxon>
        <taxon>Orthornavirae</taxon>
        <taxon>Negarnaviricota</taxon>
        <taxon>Polyploviricotina</taxon>
        <taxon>Insthoviricetes</taxon>
        <taxon>Articulavirales</taxon>
        <taxon>Orthomyxoviridae</taxon>
        <taxon>Alphainfluenzavirus</taxon>
        <taxon>Alphainfluenzavirus influenzae</taxon>
        <taxon>Influenza A virus</taxon>
    </lineage>
</organism>
<organismHost>
    <name type="scientific">Aves</name>
    <dbReference type="NCBI Taxonomy" id="8782"/>
</organismHost>
<organismHost>
    <name type="scientific">Felis catus</name>
    <name type="common">Cat</name>
    <name type="synonym">Felis silvestris catus</name>
    <dbReference type="NCBI Taxonomy" id="9685"/>
</organismHost>
<organismHost>
    <name type="scientific">Homo sapiens</name>
    <name type="common">Human</name>
    <dbReference type="NCBI Taxonomy" id="9606"/>
</organismHost>
<organismHost>
    <name type="scientific">Panthera pardus</name>
    <name type="common">Leopard</name>
    <name type="synonym">Felis pardus</name>
    <dbReference type="NCBI Taxonomy" id="9691"/>
</organismHost>
<organismHost>
    <name type="scientific">Panthera tigris</name>
    <name type="common">Tiger</name>
    <dbReference type="NCBI Taxonomy" id="9694"/>
</organismHost>
<organismHost>
    <name type="scientific">Sus scrofa</name>
    <name type="common">Pig</name>
    <dbReference type="NCBI Taxonomy" id="9823"/>
</organismHost>
<keyword id="KW-0106">Calcium</keyword>
<keyword id="KW-1015">Disulfide bond</keyword>
<keyword id="KW-0325">Glycoprotein</keyword>
<keyword id="KW-0326">Glycosidase</keyword>
<keyword id="KW-1032">Host cell membrane</keyword>
<keyword id="KW-1043">Host membrane</keyword>
<keyword id="KW-0378">Hydrolase</keyword>
<keyword id="KW-0472">Membrane</keyword>
<keyword id="KW-0479">Metal-binding</keyword>
<keyword id="KW-0735">Signal-anchor</keyword>
<keyword id="KW-0812">Transmembrane</keyword>
<keyword id="KW-1133">Transmembrane helix</keyword>
<keyword id="KW-0946">Virion</keyword>
<sequence>MNPNQKIITIGSICMVIGIVSLMLQIGNMISIWVSHSIQTGNQHQAEPISNTNFLTEKAVASVTLAGNSSLCPISGWAVHSKDNSIRIGSKGDVFVIREPFISCSHLECRTFFLTQGALLNDKHSNGTVKDRSPHRTLMSCPVGEAPSPYNSRFESVAWSASACHDGTSWLTIGISGPDNGAVAVLKYNGIITDTIKSWRNNILRTQESECACVNGSCFTVMTDGPSNGQASYKIFKMEKGKVVKSVELDAPNYHYEECSCYPDAGEITCVCRDNWHGSNRPWVSFNQNLEYQIGYICSGVFGDNPRPNDGTGSCGPVSPNGAYGVKGFSFKYGNGVWIGRTKSTNSRSGFEMIWDPNGWTGTDSSFSVKQDIVAITDWSGYSGSFVQHPELTGLDCIRPCFWVELIRGRPKESTIWTSGSSISFCGVNSDTVGWSWPDGAELPFTIDK</sequence>
<gene>
    <name evidence="1" type="primary">NA</name>
</gene>
<reference key="1">
    <citation type="journal article" date="2004" name="Proc. Natl. Acad. Sci. U.S.A.">
        <title>H5N1 influenza: a protean pandemic threat.</title>
        <authorList>
            <person name="Guan Y."/>
            <person name="Poon L.L.M."/>
            <person name="Cheung C.Y."/>
            <person name="Ellis T.M."/>
            <person name="Lim W."/>
            <person name="Lipatov A.S."/>
            <person name="Chan K.H."/>
            <person name="Sturm-Ramirez K.M."/>
            <person name="Cheung C.L."/>
            <person name="Leung Y.H.C."/>
            <person name="Yuen K.Y."/>
            <person name="Webster R.G."/>
            <person name="Peiris J.S.M."/>
        </authorList>
    </citation>
    <scope>NUCLEOTIDE SEQUENCE [GENOMIC RNA]</scope>
</reference>
<reference key="2">
    <citation type="submission" date="2008-03" db="EMBL/GenBank/DDBJ databases">
        <authorList>
            <person name="Guan Y."/>
            <person name="Poon L.L.M."/>
            <person name="Cheung C.Y."/>
            <person name="Ellis T.M."/>
            <person name="Lim W."/>
            <person name="Lipatov A.S."/>
            <person name="Chan K.H."/>
            <person name="Sturm-Ramirez K.M."/>
            <person name="Cheung C.L."/>
            <person name="Leung Y.H.C."/>
            <person name="Yuen K.Y."/>
            <person name="Webster R.G."/>
            <person name="Peiris J.S.M."/>
        </authorList>
    </citation>
    <scope>SEQUENCE REVISION</scope>
</reference>
<name>NRAM_I02A5</name>